<name>FADS2_MOUSE</name>
<evidence type="ECO:0000250" key="1">
    <source>
        <dbReference type="UniProtKB" id="B8R1K0"/>
    </source>
</evidence>
<evidence type="ECO:0000250" key="2">
    <source>
        <dbReference type="UniProtKB" id="O95864"/>
    </source>
</evidence>
<evidence type="ECO:0000250" key="3">
    <source>
        <dbReference type="UniProtKB" id="Q9Z122"/>
    </source>
</evidence>
<evidence type="ECO:0000255" key="4"/>
<evidence type="ECO:0000255" key="5">
    <source>
        <dbReference type="PROSITE-ProRule" id="PRU00279"/>
    </source>
</evidence>
<evidence type="ECO:0000256" key="6">
    <source>
        <dbReference type="SAM" id="MobiDB-lite"/>
    </source>
</evidence>
<evidence type="ECO:0000269" key="7">
    <source>
    </source>
</evidence>
<evidence type="ECO:0000269" key="8">
    <source>
    </source>
</evidence>
<evidence type="ECO:0000303" key="9">
    <source>
    </source>
</evidence>
<evidence type="ECO:0000303" key="10">
    <source>
    </source>
</evidence>
<evidence type="ECO:0000305" key="11"/>
<evidence type="ECO:0000305" key="12">
    <source>
    </source>
</evidence>
<evidence type="ECO:0000312" key="13">
    <source>
        <dbReference type="MGI" id="MGI:1930079"/>
    </source>
</evidence>
<dbReference type="EC" id="1.14.19.3" evidence="8"/>
<dbReference type="EMBL" id="AF126798">
    <property type="protein sequence ID" value="AAD20017.1"/>
    <property type="molecule type" value="mRNA"/>
</dbReference>
<dbReference type="EMBL" id="AK143524">
    <property type="protein sequence ID" value="BAE25416.1"/>
    <property type="molecule type" value="mRNA"/>
</dbReference>
<dbReference type="EMBL" id="BC057189">
    <property type="protein sequence ID" value="AAH57189.1"/>
    <property type="molecule type" value="mRNA"/>
</dbReference>
<dbReference type="CCDS" id="CCDS29571.1"/>
<dbReference type="RefSeq" id="NP_062673.1">
    <property type="nucleotide sequence ID" value="NM_019699.2"/>
</dbReference>
<dbReference type="SMR" id="Q9Z0R9"/>
<dbReference type="BioGRID" id="208008">
    <property type="interactions" value="5"/>
</dbReference>
<dbReference type="FunCoup" id="Q9Z0R9">
    <property type="interactions" value="350"/>
</dbReference>
<dbReference type="STRING" id="10090.ENSMUSP00000025567"/>
<dbReference type="BindingDB" id="Q9Z0R9"/>
<dbReference type="ChEMBL" id="CHEMBL5087"/>
<dbReference type="iPTMnet" id="Q9Z0R9"/>
<dbReference type="PhosphoSitePlus" id="Q9Z0R9"/>
<dbReference type="SwissPalm" id="Q9Z0R9"/>
<dbReference type="jPOST" id="Q9Z0R9"/>
<dbReference type="PaxDb" id="10090-ENSMUSP00000025567"/>
<dbReference type="PeptideAtlas" id="Q9Z0R9"/>
<dbReference type="ProteomicsDB" id="277036"/>
<dbReference type="Pumba" id="Q9Z0R9"/>
<dbReference type="Antibodypedia" id="1645">
    <property type="antibodies" value="182 antibodies from 25 providers"/>
</dbReference>
<dbReference type="DNASU" id="56473"/>
<dbReference type="Ensembl" id="ENSMUST00000025567.9">
    <property type="protein sequence ID" value="ENSMUSP00000025567.8"/>
    <property type="gene ID" value="ENSMUSG00000024665.9"/>
</dbReference>
<dbReference type="GeneID" id="56473"/>
<dbReference type="KEGG" id="mmu:56473"/>
<dbReference type="UCSC" id="uc008gpb.1">
    <property type="organism name" value="mouse"/>
</dbReference>
<dbReference type="AGR" id="MGI:1930079"/>
<dbReference type="CTD" id="9415"/>
<dbReference type="MGI" id="MGI:1930079">
    <property type="gene designation" value="Fads2"/>
</dbReference>
<dbReference type="VEuPathDB" id="HostDB:ENSMUSG00000024665"/>
<dbReference type="eggNOG" id="KOG4232">
    <property type="taxonomic scope" value="Eukaryota"/>
</dbReference>
<dbReference type="GeneTree" id="ENSGT00950000182990"/>
<dbReference type="HOGENOM" id="CLU_016265_0_1_1"/>
<dbReference type="InParanoid" id="Q9Z0R9"/>
<dbReference type="OMA" id="QWWKNKH"/>
<dbReference type="OrthoDB" id="260091at2759"/>
<dbReference type="PhylomeDB" id="Q9Z0R9"/>
<dbReference type="TreeFam" id="TF313604"/>
<dbReference type="Reactome" id="R-MMU-2046105">
    <property type="pathway name" value="Linoleic acid (LA) metabolism"/>
</dbReference>
<dbReference type="Reactome" id="R-MMU-2046106">
    <property type="pathway name" value="alpha-linolenic acid (ALA) metabolism"/>
</dbReference>
<dbReference type="UniPathway" id="UPA00658"/>
<dbReference type="BioGRID-ORCS" id="56473">
    <property type="hits" value="2 hits in 82 CRISPR screens"/>
</dbReference>
<dbReference type="ChiTaRS" id="Fads2">
    <property type="organism name" value="mouse"/>
</dbReference>
<dbReference type="PRO" id="PR:Q9Z0R9"/>
<dbReference type="Proteomes" id="UP000000589">
    <property type="component" value="Chromosome 19"/>
</dbReference>
<dbReference type="RNAct" id="Q9Z0R9">
    <property type="molecule type" value="protein"/>
</dbReference>
<dbReference type="Bgee" id="ENSMUSG00000024665">
    <property type="expression patterns" value="Expressed in ear vesicle and 238 other cell types or tissues"/>
</dbReference>
<dbReference type="ExpressionAtlas" id="Q9Z0R9">
    <property type="expression patterns" value="baseline and differential"/>
</dbReference>
<dbReference type="GO" id="GO:0005789">
    <property type="term" value="C:endoplasmic reticulum membrane"/>
    <property type="evidence" value="ECO:0000314"/>
    <property type="project" value="MGI"/>
</dbReference>
<dbReference type="GO" id="GO:0016020">
    <property type="term" value="C:membrane"/>
    <property type="evidence" value="ECO:0000304"/>
    <property type="project" value="MGI"/>
</dbReference>
<dbReference type="GO" id="GO:0016213">
    <property type="term" value="F:acyl-CoA 6-desaturase activity"/>
    <property type="evidence" value="ECO:0000315"/>
    <property type="project" value="MGI"/>
</dbReference>
<dbReference type="GO" id="GO:0016215">
    <property type="term" value="F:acyl-CoA desaturase activity"/>
    <property type="evidence" value="ECO:0000315"/>
    <property type="project" value="MGI"/>
</dbReference>
<dbReference type="GO" id="GO:0004768">
    <property type="term" value="F:stearoyl-CoA 9-desaturase activity"/>
    <property type="evidence" value="ECO:0000314"/>
    <property type="project" value="MGI"/>
</dbReference>
<dbReference type="GO" id="GO:0036109">
    <property type="term" value="P:alpha-linolenic acid metabolic process"/>
    <property type="evidence" value="ECO:0000314"/>
    <property type="project" value="MGI"/>
</dbReference>
<dbReference type="GO" id="GO:0002538">
    <property type="term" value="P:arachidonate metabolite production involved in inflammatory response"/>
    <property type="evidence" value="ECO:0007669"/>
    <property type="project" value="Ensembl"/>
</dbReference>
<dbReference type="GO" id="GO:0006633">
    <property type="term" value="P:fatty acid biosynthetic process"/>
    <property type="evidence" value="ECO:0000315"/>
    <property type="project" value="MGI"/>
</dbReference>
<dbReference type="GO" id="GO:1901570">
    <property type="term" value="P:fatty acid derivative biosynthetic process"/>
    <property type="evidence" value="ECO:0000314"/>
    <property type="project" value="MGI"/>
</dbReference>
<dbReference type="GO" id="GO:0043651">
    <property type="term" value="P:linoleic acid metabolic process"/>
    <property type="evidence" value="ECO:0000315"/>
    <property type="project" value="MGI"/>
</dbReference>
<dbReference type="GO" id="GO:0042759">
    <property type="term" value="P:long-chain fatty acid biosynthetic process"/>
    <property type="evidence" value="ECO:0000314"/>
    <property type="project" value="MGI"/>
</dbReference>
<dbReference type="GO" id="GO:1900409">
    <property type="term" value="P:positive regulation of cellular response to oxidative stress"/>
    <property type="evidence" value="ECO:0007669"/>
    <property type="project" value="Ensembl"/>
</dbReference>
<dbReference type="GO" id="GO:0006636">
    <property type="term" value="P:unsaturated fatty acid biosynthetic process"/>
    <property type="evidence" value="ECO:0000314"/>
    <property type="project" value="MGI"/>
</dbReference>
<dbReference type="CDD" id="cd03506">
    <property type="entry name" value="Delta6-FADS-like"/>
    <property type="match status" value="1"/>
</dbReference>
<dbReference type="FunFam" id="3.10.120.10:FF:000010">
    <property type="entry name" value="Delta-6 fatty acyl desaturase"/>
    <property type="match status" value="1"/>
</dbReference>
<dbReference type="Gene3D" id="3.10.120.10">
    <property type="entry name" value="Cytochrome b5-like heme/steroid binding domain"/>
    <property type="match status" value="1"/>
</dbReference>
<dbReference type="InterPro" id="IPR001199">
    <property type="entry name" value="Cyt_B5-like_heme/steroid-bd"/>
</dbReference>
<dbReference type="InterPro" id="IPR036400">
    <property type="entry name" value="Cyt_B5-like_heme/steroid_sf"/>
</dbReference>
<dbReference type="InterPro" id="IPR005804">
    <property type="entry name" value="FA_desaturase_dom"/>
</dbReference>
<dbReference type="InterPro" id="IPR012171">
    <property type="entry name" value="Fatty_acid_desaturase"/>
</dbReference>
<dbReference type="PANTHER" id="PTHR19353:SF12">
    <property type="entry name" value="ACYL-COA 6-DESATURASE"/>
    <property type="match status" value="1"/>
</dbReference>
<dbReference type="PANTHER" id="PTHR19353">
    <property type="entry name" value="FATTY ACID DESATURASE 2"/>
    <property type="match status" value="1"/>
</dbReference>
<dbReference type="Pfam" id="PF00173">
    <property type="entry name" value="Cyt-b5"/>
    <property type="match status" value="1"/>
</dbReference>
<dbReference type="Pfam" id="PF00487">
    <property type="entry name" value="FA_desaturase"/>
    <property type="match status" value="1"/>
</dbReference>
<dbReference type="PIRSF" id="PIRSF015921">
    <property type="entry name" value="FA_sphinglp_des"/>
    <property type="match status" value="1"/>
</dbReference>
<dbReference type="SMART" id="SM01117">
    <property type="entry name" value="Cyt-b5"/>
    <property type="match status" value="1"/>
</dbReference>
<dbReference type="SUPFAM" id="SSF55856">
    <property type="entry name" value="Cytochrome b5-like heme/steroid binding domain"/>
    <property type="match status" value="1"/>
</dbReference>
<dbReference type="PROSITE" id="PS50255">
    <property type="entry name" value="CYTOCHROME_B5_2"/>
    <property type="match status" value="1"/>
</dbReference>
<comment type="function">
    <text evidence="1 3 8">Involved in the biosynthesis of highly unsaturated fatty acids (HUFA) from the essential polyunsaturated fatty acids (PUFA) linoleic acid (LA) (18:2n-6) and alpha-linolenic acid (ALA) (18:3n-3) precursors, acting as a fatty acyl-coenzyme A (CoA) desaturase that introduces a cis double bond at carbon 6 of the fatty acyl chain. Catalyzes the first and rate limiting step in this pathway which is the desaturation of LA (18:2n-6) and ALA (18:3n-3) into gamma-linoleate (GLA) (18:3n-6) and stearidonate (18:4n-3), respectively (PubMed:9867867). Subsequently, in the biosynthetic pathway of HUFA n-3 series, it desaturates tetracosapentaenoate (24:5n-3) to tetracosahexaenoate (24:6n-3), which is then converted to docosahexaenoate (DHA)(22:6n-3), an important lipid for nervous system function (By similarity). It can also desaturate (11E)-octadecenoate (trans-vaccenoate) at carbon 6 generating (6Z,11E)-octadecadienoate (By similarity). In addition to Delta-6 activity, this enzyme exhibits Delta-8 activity with slight biases toward n-3 fatty acyl-CoA substrates (By similarity).</text>
</comment>
<comment type="catalytic activity">
    <reaction evidence="8">
        <text>(9Z,12Z)-octadecadienoyl-CoA + 2 Fe(II)-[cytochrome b5] + O2 + 2 H(+) = (6Z,9Z,12Z)-octadecatrienoyl-CoA + 2 Fe(III)-[cytochrome b5] + 2 H2O</text>
        <dbReference type="Rhea" id="RHEA:47140"/>
        <dbReference type="Rhea" id="RHEA-COMP:10438"/>
        <dbReference type="Rhea" id="RHEA-COMP:10439"/>
        <dbReference type="ChEBI" id="CHEBI:15377"/>
        <dbReference type="ChEBI" id="CHEBI:15378"/>
        <dbReference type="ChEBI" id="CHEBI:15379"/>
        <dbReference type="ChEBI" id="CHEBI:29033"/>
        <dbReference type="ChEBI" id="CHEBI:29034"/>
        <dbReference type="ChEBI" id="CHEBI:57363"/>
        <dbReference type="ChEBI" id="CHEBI:57383"/>
        <dbReference type="EC" id="1.14.19.3"/>
    </reaction>
    <physiologicalReaction direction="left-to-right" evidence="8">
        <dbReference type="Rhea" id="RHEA:47141"/>
    </physiologicalReaction>
</comment>
<comment type="catalytic activity">
    <reaction evidence="8">
        <text>(9Z,12Z,15Z)-octadecatrienoyl-CoA + 2 Fe(II)-[cytochrome b5] + O2 + 2 H(+) = (6Z,9Z,12Z,15Z)-octadecatetraenoyl-CoA + 2 Fe(III)-[cytochrome b5] + 2 H2O</text>
        <dbReference type="Rhea" id="RHEA:47144"/>
        <dbReference type="Rhea" id="RHEA-COMP:10438"/>
        <dbReference type="Rhea" id="RHEA-COMP:10439"/>
        <dbReference type="ChEBI" id="CHEBI:15377"/>
        <dbReference type="ChEBI" id="CHEBI:15378"/>
        <dbReference type="ChEBI" id="CHEBI:15379"/>
        <dbReference type="ChEBI" id="CHEBI:29033"/>
        <dbReference type="ChEBI" id="CHEBI:29034"/>
        <dbReference type="ChEBI" id="CHEBI:71489"/>
        <dbReference type="ChEBI" id="CHEBI:74034"/>
        <dbReference type="EC" id="1.14.19.3"/>
    </reaction>
    <physiologicalReaction direction="left-to-right" evidence="8">
        <dbReference type="Rhea" id="RHEA:47145"/>
    </physiologicalReaction>
</comment>
<comment type="catalytic activity">
    <reaction evidence="3">
        <text>(9Z,12Z,15Z,18Z,21Z)-tetracosapentaenoyl-CoA + 2 Fe(II)-[cytochrome b5] + O2 + 2 H(+) = (6Z,9Z,12Z,15Z,18Z,21Z)-tetracosahexaenoyl-CoA + 2 Fe(III)-[cytochrome b5] + 2 H2O</text>
        <dbReference type="Rhea" id="RHEA:36999"/>
        <dbReference type="Rhea" id="RHEA-COMP:10438"/>
        <dbReference type="Rhea" id="RHEA-COMP:10439"/>
        <dbReference type="ChEBI" id="CHEBI:15377"/>
        <dbReference type="ChEBI" id="CHEBI:15378"/>
        <dbReference type="ChEBI" id="CHEBI:15379"/>
        <dbReference type="ChEBI" id="CHEBI:29033"/>
        <dbReference type="ChEBI" id="CHEBI:29034"/>
        <dbReference type="ChEBI" id="CHEBI:74083"/>
        <dbReference type="ChEBI" id="CHEBI:74086"/>
    </reaction>
    <physiologicalReaction direction="left-to-right" evidence="3">
        <dbReference type="Rhea" id="RHEA:37000"/>
    </physiologicalReaction>
</comment>
<comment type="catalytic activity">
    <reaction evidence="3">
        <text>(11E)-octadecenoyl-CoA + 2 Fe(II)-[cytochrome b5] + O2 + 2 H(+) = (6Z,11E)-octadecadienoyl-CoA + 2 Fe(III)-[cytochrome b5] + 2 H2O</text>
        <dbReference type="Rhea" id="RHEA:46064"/>
        <dbReference type="Rhea" id="RHEA-COMP:10438"/>
        <dbReference type="Rhea" id="RHEA-COMP:10439"/>
        <dbReference type="ChEBI" id="CHEBI:15377"/>
        <dbReference type="ChEBI" id="CHEBI:15378"/>
        <dbReference type="ChEBI" id="CHEBI:15379"/>
        <dbReference type="ChEBI" id="CHEBI:29033"/>
        <dbReference type="ChEBI" id="CHEBI:29034"/>
        <dbReference type="ChEBI" id="CHEBI:74296"/>
        <dbReference type="ChEBI" id="CHEBI:85652"/>
    </reaction>
    <physiologicalReaction direction="left-to-right" evidence="3">
        <dbReference type="Rhea" id="RHEA:46065"/>
    </physiologicalReaction>
</comment>
<comment type="catalytic activity">
    <reaction evidence="1">
        <text>(11Z,14Z)-eicosadienoyl-CoA + 2 Fe(II)-[cytochrome b5] + O2 + 2 H(+) = (8Z,11Z,14Z)-eicosatrienoyl-CoA + 2 Fe(III)-[cytochrome b5] + 2 H2O</text>
        <dbReference type="Rhea" id="RHEA:39567"/>
        <dbReference type="Rhea" id="RHEA-COMP:10438"/>
        <dbReference type="Rhea" id="RHEA-COMP:10439"/>
        <dbReference type="ChEBI" id="CHEBI:15377"/>
        <dbReference type="ChEBI" id="CHEBI:15378"/>
        <dbReference type="ChEBI" id="CHEBI:15379"/>
        <dbReference type="ChEBI" id="CHEBI:29033"/>
        <dbReference type="ChEBI" id="CHEBI:29034"/>
        <dbReference type="ChEBI" id="CHEBI:74264"/>
        <dbReference type="ChEBI" id="CHEBI:76410"/>
    </reaction>
    <physiologicalReaction direction="left-to-right" evidence="1">
        <dbReference type="Rhea" id="RHEA:39568"/>
    </physiologicalReaction>
</comment>
<comment type="catalytic activity">
    <reaction evidence="1">
        <text>(11Z,14Z,17Z)-eicosatrienoyl-CoA + 2 Fe(II)-[cytochrome b5] + O2 + 2 H(+) = (8Z,11Z,14Z,17Z)-eicosatetraenoyl-CoA + 2 Fe(III)-[cytochrome b5] + 2 H2O</text>
        <dbReference type="Rhea" id="RHEA:39571"/>
        <dbReference type="Rhea" id="RHEA-COMP:10438"/>
        <dbReference type="Rhea" id="RHEA-COMP:10439"/>
        <dbReference type="ChEBI" id="CHEBI:15377"/>
        <dbReference type="ChEBI" id="CHEBI:15378"/>
        <dbReference type="ChEBI" id="CHEBI:15379"/>
        <dbReference type="ChEBI" id="CHEBI:29033"/>
        <dbReference type="ChEBI" id="CHEBI:29034"/>
        <dbReference type="ChEBI" id="CHEBI:74265"/>
        <dbReference type="ChEBI" id="CHEBI:74328"/>
    </reaction>
    <physiologicalReaction direction="left-to-right" evidence="1">
        <dbReference type="Rhea" id="RHEA:39572"/>
    </physiologicalReaction>
</comment>
<comment type="pathway">
    <text evidence="12">Lipid metabolism; polyunsaturated fatty acid biosynthesis.</text>
</comment>
<comment type="subcellular location">
    <subcellularLocation>
        <location evidence="11">Endoplasmic reticulum membrane</location>
        <topology evidence="4">Multi-pass membrane protein</topology>
    </subcellularLocation>
</comment>
<comment type="tissue specificity">
    <text evidence="7 8">Highly expressed in the adrenal gland, liver, brain, and testis, tissues where lipogenesis and steroidogenesis are active. Also detected in lung, heart, and skeletal muscle.</text>
</comment>
<comment type="developmental stage">
    <text>Found in 13-day-old embryo heart.</text>
</comment>
<comment type="induction">
    <text evidence="7 8">Induced by dietary PUFA-deficient diet. Induced by a fat-free diet and by a diet containing triolein (18:1n-9) as the only fat source. Down-regulated in liver by dietary PUFA.</text>
</comment>
<comment type="domain">
    <text evidence="2">The protein sequence includes a number of characteristic features of microsomal fatty acid desaturases including the three histidine boxes HXXXH, HXXHH, and QXXHH (these domains may contain the active site and/or be involved in metal ion binding), and the N-terminal cytochrome b5 domain containing the heme-binding motif, HPGG, similar to that of other fatty acid desaturases.</text>
</comment>
<comment type="similarity">
    <text evidence="11">Belongs to the fatty acid desaturase type 1 family.</text>
</comment>
<sequence length="444" mass="52387">MGKGGNQGEGSTERQAPMPTFRWEEIQKHNLRTDRWLVIDRKVYNVTKWSQRHPGGHRVIGHYSGEDATDAFRAFHLDLDFVGKFLKPLLIGELAPEEPSLDRGKSSQITEDFRALKKTAEDMNLFKTNHLFFFLLLSHIIVMESLAWFILSYFGTGWIPTLVTAFVLATSQAQAGWLQHDYGHLSVYKKSIWNHVVHKFVIGHLKGASANWWNHRHFQHHAKPNIFHKDPDIKSLHVFVLGEWQPLEYGKKKLKYLPYNHQHEYFFLIGPPLLIPMYFQYQIIMTMISRRDWVDLAWAISYYMRFFYTYIPFYGILGALVFLNFIRFLESHWFVWVTQMNHLVMEIDLDHYRDWFSSQLAATCNVEQSFFNDWFSGHLNFQIEHHLFPTMPRHNLHKIAPLVKSLCAKHGIEYQEKPLLRALIDIVSSLKKSGELWLDAYLHK</sequence>
<keyword id="KW-0249">Electron transport</keyword>
<keyword id="KW-0256">Endoplasmic reticulum</keyword>
<keyword id="KW-0275">Fatty acid biosynthesis</keyword>
<keyword id="KW-0276">Fatty acid metabolism</keyword>
<keyword id="KW-0444">Lipid biosynthesis</keyword>
<keyword id="KW-0443">Lipid metabolism</keyword>
<keyword id="KW-0472">Membrane</keyword>
<keyword id="KW-0560">Oxidoreductase</keyword>
<keyword id="KW-1185">Reference proteome</keyword>
<keyword id="KW-0812">Transmembrane</keyword>
<keyword id="KW-1133">Transmembrane helix</keyword>
<keyword id="KW-0813">Transport</keyword>
<organism>
    <name type="scientific">Mus musculus</name>
    <name type="common">Mouse</name>
    <dbReference type="NCBI Taxonomy" id="10090"/>
    <lineage>
        <taxon>Eukaryota</taxon>
        <taxon>Metazoa</taxon>
        <taxon>Chordata</taxon>
        <taxon>Craniata</taxon>
        <taxon>Vertebrata</taxon>
        <taxon>Euteleostomi</taxon>
        <taxon>Mammalia</taxon>
        <taxon>Eutheria</taxon>
        <taxon>Euarchontoglires</taxon>
        <taxon>Glires</taxon>
        <taxon>Rodentia</taxon>
        <taxon>Myomorpha</taxon>
        <taxon>Muroidea</taxon>
        <taxon>Muridae</taxon>
        <taxon>Murinae</taxon>
        <taxon>Mus</taxon>
        <taxon>Mus</taxon>
    </lineage>
</organism>
<proteinExistence type="evidence at protein level"/>
<feature type="chain" id="PRO_0000307103" description="Acyl-CoA 6-desaturase">
    <location>
        <begin position="1"/>
        <end position="444"/>
    </location>
</feature>
<feature type="topological domain" description="Cytoplasmic" evidence="11">
    <location>
        <begin position="1"/>
        <end position="130"/>
    </location>
</feature>
<feature type="transmembrane region" description="Helical" evidence="4">
    <location>
        <begin position="131"/>
        <end position="151"/>
    </location>
</feature>
<feature type="topological domain" description="Lumenal" evidence="11">
    <location>
        <position position="152"/>
    </location>
</feature>
<feature type="transmembrane region" description="Helical" evidence="4">
    <location>
        <begin position="153"/>
        <end position="173"/>
    </location>
</feature>
<feature type="topological domain" description="Cytoplasmic" evidence="11">
    <location>
        <begin position="174"/>
        <end position="264"/>
    </location>
</feature>
<feature type="transmembrane region" description="Helical" evidence="4">
    <location>
        <begin position="265"/>
        <end position="285"/>
    </location>
</feature>
<feature type="topological domain" description="Lumenal" evidence="11">
    <location>
        <begin position="286"/>
        <end position="305"/>
    </location>
</feature>
<feature type="transmembrane region" description="Helical" evidence="4">
    <location>
        <begin position="306"/>
        <end position="326"/>
    </location>
</feature>
<feature type="topological domain" description="Cytoplasmic" evidence="11">
    <location>
        <begin position="327"/>
        <end position="444"/>
    </location>
</feature>
<feature type="domain" description="Cytochrome b5 heme-binding" evidence="5">
    <location>
        <begin position="18"/>
        <end position="95"/>
    </location>
</feature>
<feature type="region of interest" description="Disordered" evidence="6">
    <location>
        <begin position="1"/>
        <end position="21"/>
    </location>
</feature>
<feature type="short sequence motif" description="Histidine box-1">
    <location>
        <begin position="180"/>
        <end position="184"/>
    </location>
</feature>
<feature type="short sequence motif" description="Histidine box-2">
    <location>
        <begin position="217"/>
        <end position="221"/>
    </location>
</feature>
<feature type="short sequence motif" description="Histidine box-3">
    <location>
        <begin position="382"/>
        <end position="386"/>
    </location>
</feature>
<protein>
    <recommendedName>
        <fullName evidence="12">Acyl-CoA 6-desaturase</fullName>
        <ecNumber evidence="8">1.14.19.3</ecNumber>
    </recommendedName>
    <alternativeName>
        <fullName>Delta(6) fatty acid desaturase</fullName>
        <shortName evidence="9">D6D</shortName>
        <shortName>Delta(6) desaturase</shortName>
        <shortName evidence="9 10">Delta-6 desaturase</shortName>
    </alternativeName>
    <alternativeName>
        <fullName>Fatty acid desaturase 2</fullName>
    </alternativeName>
</protein>
<accession>Q9Z0R9</accession>
<reference key="1">
    <citation type="journal article" date="1999" name="J. Biol. Chem.">
        <title>Cloning, expression, and nutritional regulation of the mammalian Delta-6 desaturase.</title>
        <authorList>
            <person name="Cho H.P."/>
            <person name="Nakamura M.T."/>
            <person name="Clarke S.D."/>
        </authorList>
    </citation>
    <scope>NUCLEOTIDE SEQUENCE [MRNA]</scope>
    <scope>FUNCTION</scope>
    <scope>CATALYTIC ACTIVITY</scope>
    <scope>PATHWAY</scope>
    <scope>TISSUE SPECIFICITY</scope>
    <scope>INDUCTION</scope>
</reference>
<reference key="2">
    <citation type="journal article" date="2005" name="Science">
        <title>The transcriptional landscape of the mammalian genome.</title>
        <authorList>
            <person name="Carninci P."/>
            <person name="Kasukawa T."/>
            <person name="Katayama S."/>
            <person name="Gough J."/>
            <person name="Frith M.C."/>
            <person name="Maeda N."/>
            <person name="Oyama R."/>
            <person name="Ravasi T."/>
            <person name="Lenhard B."/>
            <person name="Wells C."/>
            <person name="Kodzius R."/>
            <person name="Shimokawa K."/>
            <person name="Bajic V.B."/>
            <person name="Brenner S.E."/>
            <person name="Batalov S."/>
            <person name="Forrest A.R."/>
            <person name="Zavolan M."/>
            <person name="Davis M.J."/>
            <person name="Wilming L.G."/>
            <person name="Aidinis V."/>
            <person name="Allen J.E."/>
            <person name="Ambesi-Impiombato A."/>
            <person name="Apweiler R."/>
            <person name="Aturaliya R.N."/>
            <person name="Bailey T.L."/>
            <person name="Bansal M."/>
            <person name="Baxter L."/>
            <person name="Beisel K.W."/>
            <person name="Bersano T."/>
            <person name="Bono H."/>
            <person name="Chalk A.M."/>
            <person name="Chiu K.P."/>
            <person name="Choudhary V."/>
            <person name="Christoffels A."/>
            <person name="Clutterbuck D.R."/>
            <person name="Crowe M.L."/>
            <person name="Dalla E."/>
            <person name="Dalrymple B.P."/>
            <person name="de Bono B."/>
            <person name="Della Gatta G."/>
            <person name="di Bernardo D."/>
            <person name="Down T."/>
            <person name="Engstrom P."/>
            <person name="Fagiolini M."/>
            <person name="Faulkner G."/>
            <person name="Fletcher C.F."/>
            <person name="Fukushima T."/>
            <person name="Furuno M."/>
            <person name="Futaki S."/>
            <person name="Gariboldi M."/>
            <person name="Georgii-Hemming P."/>
            <person name="Gingeras T.R."/>
            <person name="Gojobori T."/>
            <person name="Green R.E."/>
            <person name="Gustincich S."/>
            <person name="Harbers M."/>
            <person name="Hayashi Y."/>
            <person name="Hensch T.K."/>
            <person name="Hirokawa N."/>
            <person name="Hill D."/>
            <person name="Huminiecki L."/>
            <person name="Iacono M."/>
            <person name="Ikeo K."/>
            <person name="Iwama A."/>
            <person name="Ishikawa T."/>
            <person name="Jakt M."/>
            <person name="Kanapin A."/>
            <person name="Katoh M."/>
            <person name="Kawasawa Y."/>
            <person name="Kelso J."/>
            <person name="Kitamura H."/>
            <person name="Kitano H."/>
            <person name="Kollias G."/>
            <person name="Krishnan S.P."/>
            <person name="Kruger A."/>
            <person name="Kummerfeld S.K."/>
            <person name="Kurochkin I.V."/>
            <person name="Lareau L.F."/>
            <person name="Lazarevic D."/>
            <person name="Lipovich L."/>
            <person name="Liu J."/>
            <person name="Liuni S."/>
            <person name="McWilliam S."/>
            <person name="Madan Babu M."/>
            <person name="Madera M."/>
            <person name="Marchionni L."/>
            <person name="Matsuda H."/>
            <person name="Matsuzawa S."/>
            <person name="Miki H."/>
            <person name="Mignone F."/>
            <person name="Miyake S."/>
            <person name="Morris K."/>
            <person name="Mottagui-Tabar S."/>
            <person name="Mulder N."/>
            <person name="Nakano N."/>
            <person name="Nakauchi H."/>
            <person name="Ng P."/>
            <person name="Nilsson R."/>
            <person name="Nishiguchi S."/>
            <person name="Nishikawa S."/>
            <person name="Nori F."/>
            <person name="Ohara O."/>
            <person name="Okazaki Y."/>
            <person name="Orlando V."/>
            <person name="Pang K.C."/>
            <person name="Pavan W.J."/>
            <person name="Pavesi G."/>
            <person name="Pesole G."/>
            <person name="Petrovsky N."/>
            <person name="Piazza S."/>
            <person name="Reed J."/>
            <person name="Reid J.F."/>
            <person name="Ring B.Z."/>
            <person name="Ringwald M."/>
            <person name="Rost B."/>
            <person name="Ruan Y."/>
            <person name="Salzberg S.L."/>
            <person name="Sandelin A."/>
            <person name="Schneider C."/>
            <person name="Schoenbach C."/>
            <person name="Sekiguchi K."/>
            <person name="Semple C.A."/>
            <person name="Seno S."/>
            <person name="Sessa L."/>
            <person name="Sheng Y."/>
            <person name="Shibata Y."/>
            <person name="Shimada H."/>
            <person name="Shimada K."/>
            <person name="Silva D."/>
            <person name="Sinclair B."/>
            <person name="Sperling S."/>
            <person name="Stupka E."/>
            <person name="Sugiura K."/>
            <person name="Sultana R."/>
            <person name="Takenaka Y."/>
            <person name="Taki K."/>
            <person name="Tammoja K."/>
            <person name="Tan S.L."/>
            <person name="Tang S."/>
            <person name="Taylor M.S."/>
            <person name="Tegner J."/>
            <person name="Teichmann S.A."/>
            <person name="Ueda H.R."/>
            <person name="van Nimwegen E."/>
            <person name="Verardo R."/>
            <person name="Wei C.L."/>
            <person name="Yagi K."/>
            <person name="Yamanishi H."/>
            <person name="Zabarovsky E."/>
            <person name="Zhu S."/>
            <person name="Zimmer A."/>
            <person name="Hide W."/>
            <person name="Bult C."/>
            <person name="Grimmond S.M."/>
            <person name="Teasdale R.D."/>
            <person name="Liu E.T."/>
            <person name="Brusic V."/>
            <person name="Quackenbush J."/>
            <person name="Wahlestedt C."/>
            <person name="Mattick J.S."/>
            <person name="Hume D.A."/>
            <person name="Kai C."/>
            <person name="Sasaki D."/>
            <person name="Tomaru Y."/>
            <person name="Fukuda S."/>
            <person name="Kanamori-Katayama M."/>
            <person name="Suzuki M."/>
            <person name="Aoki J."/>
            <person name="Arakawa T."/>
            <person name="Iida J."/>
            <person name="Imamura K."/>
            <person name="Itoh M."/>
            <person name="Kato T."/>
            <person name="Kawaji H."/>
            <person name="Kawagashira N."/>
            <person name="Kawashima T."/>
            <person name="Kojima M."/>
            <person name="Kondo S."/>
            <person name="Konno H."/>
            <person name="Nakano K."/>
            <person name="Ninomiya N."/>
            <person name="Nishio T."/>
            <person name="Okada M."/>
            <person name="Plessy C."/>
            <person name="Shibata K."/>
            <person name="Shiraki T."/>
            <person name="Suzuki S."/>
            <person name="Tagami M."/>
            <person name="Waki K."/>
            <person name="Watahiki A."/>
            <person name="Okamura-Oho Y."/>
            <person name="Suzuki H."/>
            <person name="Kawai J."/>
            <person name="Hayashizaki Y."/>
        </authorList>
    </citation>
    <scope>NUCLEOTIDE SEQUENCE [LARGE SCALE MRNA]</scope>
    <source>
        <strain>C57BL/6J</strain>
        <tissue>Embryo</tissue>
    </source>
</reference>
<reference key="3">
    <citation type="journal article" date="2004" name="Genome Res.">
        <title>The status, quality, and expansion of the NIH full-length cDNA project: the Mammalian Gene Collection (MGC).</title>
        <authorList>
            <consortium name="The MGC Project Team"/>
        </authorList>
    </citation>
    <scope>NUCLEOTIDE SEQUENCE [LARGE SCALE MRNA]</scope>
    <source>
        <strain>FVB/N</strain>
        <tissue>Liver</tissue>
    </source>
</reference>
<reference key="4">
    <citation type="journal article" date="2002" name="J. Lipid Res.">
        <title>Dual regulation of mouse Delta(5)- and Delta(6)-desaturase gene expression by SREBP-1 and PPARalpha.</title>
        <authorList>
            <person name="Matsuzaka T."/>
            <person name="Shimano H."/>
            <person name="Yahagi N."/>
            <person name="Amemiya-Kudo M."/>
            <person name="Yoshikawa T."/>
            <person name="Hasty A.H."/>
            <person name="Tamura Y."/>
            <person name="Osuga J."/>
            <person name="Okazaki H."/>
            <person name="Iizuka Y."/>
            <person name="Takahashi A."/>
            <person name="Sone H."/>
            <person name="Gotoda T."/>
            <person name="Ishibashi S."/>
            <person name="Yamada N."/>
        </authorList>
    </citation>
    <scope>TISSUE SPECIFICITY</scope>
    <scope>INDUCTION</scope>
    <source>
        <strain>C57BL/6J</strain>
        <tissue>Liver</tissue>
    </source>
</reference>
<reference key="5">
    <citation type="journal article" date="2010" name="Cell">
        <title>A tissue-specific atlas of mouse protein phosphorylation and expression.</title>
        <authorList>
            <person name="Huttlin E.L."/>
            <person name="Jedrychowski M.P."/>
            <person name="Elias J.E."/>
            <person name="Goswami T."/>
            <person name="Rad R."/>
            <person name="Beausoleil S.A."/>
            <person name="Villen J."/>
            <person name="Haas W."/>
            <person name="Sowa M.E."/>
            <person name="Gygi S.P."/>
        </authorList>
    </citation>
    <scope>IDENTIFICATION BY MASS SPECTROMETRY [LARGE SCALE ANALYSIS]</scope>
    <source>
        <tissue>Liver</tissue>
        <tissue>Testis</tissue>
    </source>
</reference>
<gene>
    <name evidence="13" type="primary">Fads2</name>
    <name type="synonym">Fadsd2</name>
</gene>